<sequence length="714" mass="79816">MCGIFGYCNFLIEKTRGEIIDTLIEGLQALEYKEYDSSGISIQGDELKSLNIYKQTGKISSLKEEIDLYNLNKNLPFISHCGIAHTRRATHGGLRRANCHPHNSDPSNEFVVVHNGVITNFANLKALLVAKGYVFKSDTDTECIPKLYKHIYDTSIELGYNLDFHVLTNLVLKELEGSYGLLCTSSHFPDEVVAARKGSPLVIGVKGKTDMDVNFVEVEYLDQEEDYLKLNTQTKSSGNVLAAAPVKYNTCLRKSPPLRSQYLRNSTTSTFNHGSSTETPAENGLPRPMEFYLSSDCASLARYVSKVVYLEDNDIAHIYDGELHIHCSKIGSEDFSFRTELSKIKKGPYDNFMQKEIYEQCETTKNVMRGRVDAFTNRVVLGGLENWLTELRRAKRIIMIASKASFHSCLAARPIFEELMEVPVNVELALDFVDRNCCIFRNDVCIFVSRSGETTDTINALNYCIKKEAVTIGVVNCSGSSISRFTHCGVHTNTGPEKGIATTKSYTSQYIALVMIALWMSEDLVSKIERRKEIIQALTIVPSQIKEVLELEPLIIELCDKKLKQHDTFLLLGRGYQFASALEGASKMKEISYVHSESILTNELGHRVLAVASDNPPIIAFATKDAFSPKIASCIDQIIERKGNPIIICNKGHKIWEQDKQKGNVVTLEVPQTVDCLQGILNVIPLQLISYWLAIKKDIGVDLPRDSAMSAPDI</sequence>
<keyword id="KW-0032">Aminotransferase</keyword>
<keyword id="KW-0315">Glutamine amidotransferase</keyword>
<keyword id="KW-0677">Repeat</keyword>
<keyword id="KW-0808">Transferase</keyword>
<comment type="function">
    <text evidence="1">Involved in amino sugar synthesis (formation of chitin, supplies the amino sugars of asparagine-linked oligosaccharides of glycoproteins).</text>
</comment>
<comment type="catalytic activity">
    <reaction>
        <text>D-fructose 6-phosphate + L-glutamine = D-glucosamine 6-phosphate + L-glutamate</text>
        <dbReference type="Rhea" id="RHEA:13237"/>
        <dbReference type="ChEBI" id="CHEBI:29985"/>
        <dbReference type="ChEBI" id="CHEBI:58359"/>
        <dbReference type="ChEBI" id="CHEBI:58725"/>
        <dbReference type="ChEBI" id="CHEBI:61527"/>
        <dbReference type="EC" id="2.6.1.16"/>
    </reaction>
</comment>
<comment type="pathway">
    <text>Nucleotide-sugar biosynthesis; UDP-N-acetyl-alpha-D-glucosamine biosynthesis; alpha-D-glucosamine 6-phosphate from D-fructose 6-phosphate: step 1/1.</text>
</comment>
<protein>
    <recommendedName>
        <fullName>Putative glutamine--fructose-6-phosphate aminotransferase [isomerizing]</fullName>
        <shortName>GFAT</shortName>
        <ecNumber>2.6.1.16</ecNumber>
    </recommendedName>
    <alternativeName>
        <fullName>D-fructose-6-phosphate amidotransferase</fullName>
    </alternativeName>
    <alternativeName>
        <fullName>Hexosephosphate aminotransferase</fullName>
    </alternativeName>
</protein>
<organism>
    <name type="scientific">Saccharomyces cerevisiae (strain YJM789)</name>
    <name type="common">Baker's yeast</name>
    <dbReference type="NCBI Taxonomy" id="307796"/>
    <lineage>
        <taxon>Eukaryota</taxon>
        <taxon>Fungi</taxon>
        <taxon>Dikarya</taxon>
        <taxon>Ascomycota</taxon>
        <taxon>Saccharomycotina</taxon>
        <taxon>Saccharomycetes</taxon>
        <taxon>Saccharomycetales</taxon>
        <taxon>Saccharomycetaceae</taxon>
        <taxon>Saccharomyces</taxon>
    </lineage>
</organism>
<feature type="chain" id="PRO_0000377676" description="Putative glutamine--fructose-6-phosphate aminotransferase [isomerizing]">
    <location>
        <begin position="1"/>
        <end position="714"/>
    </location>
</feature>
<feature type="domain" description="Glutamine amidotransferase type-2" evidence="2">
    <location>
        <begin position="2"/>
        <end position="321"/>
    </location>
</feature>
<feature type="domain" description="SIS 1" evidence="3">
    <location>
        <begin position="387"/>
        <end position="526"/>
    </location>
</feature>
<feature type="domain" description="SIS 2" evidence="3">
    <location>
        <begin position="559"/>
        <end position="704"/>
    </location>
</feature>
<feature type="region of interest" description="Disordered" evidence="4">
    <location>
        <begin position="266"/>
        <end position="285"/>
    </location>
</feature>
<feature type="compositionally biased region" description="Polar residues" evidence="4">
    <location>
        <begin position="266"/>
        <end position="280"/>
    </location>
</feature>
<feature type="active site" description="Nucleophile; for GATase activity" evidence="2">
    <location>
        <position position="2"/>
    </location>
</feature>
<dbReference type="EC" id="2.6.1.16"/>
<dbReference type="EMBL" id="AAFW02000020">
    <property type="protein sequence ID" value="EDN64472.1"/>
    <property type="molecule type" value="Genomic_DNA"/>
</dbReference>
<dbReference type="SMR" id="A6ZME2"/>
<dbReference type="HOGENOM" id="CLU_012520_5_2_1"/>
<dbReference type="OrthoDB" id="13837at4893"/>
<dbReference type="UniPathway" id="UPA00113">
    <property type="reaction ID" value="UER00528"/>
</dbReference>
<dbReference type="Proteomes" id="UP000007060">
    <property type="component" value="Unassembled WGS sequence"/>
</dbReference>
<dbReference type="GO" id="GO:0097367">
    <property type="term" value="F:carbohydrate derivative binding"/>
    <property type="evidence" value="ECO:0007669"/>
    <property type="project" value="InterPro"/>
</dbReference>
<dbReference type="GO" id="GO:0004360">
    <property type="term" value="F:glutamine-fructose-6-phosphate transaminase (isomerizing) activity"/>
    <property type="evidence" value="ECO:0007669"/>
    <property type="project" value="UniProtKB-EC"/>
</dbReference>
<dbReference type="GO" id="GO:0006002">
    <property type="term" value="P:fructose 6-phosphate metabolic process"/>
    <property type="evidence" value="ECO:0007669"/>
    <property type="project" value="TreeGrafter"/>
</dbReference>
<dbReference type="GO" id="GO:0006487">
    <property type="term" value="P:protein N-linked glycosylation"/>
    <property type="evidence" value="ECO:0007669"/>
    <property type="project" value="TreeGrafter"/>
</dbReference>
<dbReference type="GO" id="GO:0006048">
    <property type="term" value="P:UDP-N-acetylglucosamine biosynthetic process"/>
    <property type="evidence" value="ECO:0007669"/>
    <property type="project" value="UniProtKB-UniPathway"/>
</dbReference>
<dbReference type="CDD" id="cd00714">
    <property type="entry name" value="GFAT"/>
    <property type="match status" value="1"/>
</dbReference>
<dbReference type="CDD" id="cd05008">
    <property type="entry name" value="SIS_GlmS_GlmD_1"/>
    <property type="match status" value="1"/>
</dbReference>
<dbReference type="CDD" id="cd05009">
    <property type="entry name" value="SIS_GlmS_GlmD_2"/>
    <property type="match status" value="1"/>
</dbReference>
<dbReference type="FunFam" id="3.40.50.10490:FF:000001">
    <property type="entry name" value="Glutamine--fructose-6-phosphate aminotransferase [isomerizing]"/>
    <property type="match status" value="1"/>
</dbReference>
<dbReference type="FunFam" id="3.40.50.10490:FF:000002">
    <property type="entry name" value="Glutamine--fructose-6-phosphate aminotransferase [isomerizing]"/>
    <property type="match status" value="1"/>
</dbReference>
<dbReference type="Gene3D" id="3.40.50.10490">
    <property type="entry name" value="Glucose-6-phosphate isomerase like protein, domain 1"/>
    <property type="match status" value="2"/>
</dbReference>
<dbReference type="Gene3D" id="3.60.20.10">
    <property type="entry name" value="Glutamine Phosphoribosylpyrophosphate, subunit 1, domain 1"/>
    <property type="match status" value="1"/>
</dbReference>
<dbReference type="InterPro" id="IPR017932">
    <property type="entry name" value="GATase_2_dom"/>
</dbReference>
<dbReference type="InterPro" id="IPR047084">
    <property type="entry name" value="GFAT_N"/>
</dbReference>
<dbReference type="InterPro" id="IPR035466">
    <property type="entry name" value="GlmS/AgaS_SIS"/>
</dbReference>
<dbReference type="InterPro" id="IPR035490">
    <property type="entry name" value="GlmS/FrlB_SIS"/>
</dbReference>
<dbReference type="InterPro" id="IPR029055">
    <property type="entry name" value="Ntn_hydrolases_N"/>
</dbReference>
<dbReference type="InterPro" id="IPR001347">
    <property type="entry name" value="SIS_dom"/>
</dbReference>
<dbReference type="InterPro" id="IPR046348">
    <property type="entry name" value="SIS_dom_sf"/>
</dbReference>
<dbReference type="PANTHER" id="PTHR10937">
    <property type="entry name" value="GLUCOSAMINE--FRUCTOSE-6-PHOSPHATE AMINOTRANSFERASE, ISOMERIZING"/>
    <property type="match status" value="1"/>
</dbReference>
<dbReference type="PANTHER" id="PTHR10937:SF0">
    <property type="entry name" value="GLUTAMINE--FRUCTOSE-6-PHOSPHATE TRANSAMINASE (ISOMERIZING)"/>
    <property type="match status" value="1"/>
</dbReference>
<dbReference type="Pfam" id="PF13522">
    <property type="entry name" value="GATase_6"/>
    <property type="match status" value="1"/>
</dbReference>
<dbReference type="Pfam" id="PF01380">
    <property type="entry name" value="SIS"/>
    <property type="match status" value="2"/>
</dbReference>
<dbReference type="SUPFAM" id="SSF56235">
    <property type="entry name" value="N-terminal nucleophile aminohydrolases (Ntn hydrolases)"/>
    <property type="match status" value="1"/>
</dbReference>
<dbReference type="SUPFAM" id="SSF53697">
    <property type="entry name" value="SIS domain"/>
    <property type="match status" value="1"/>
</dbReference>
<dbReference type="PROSITE" id="PS51278">
    <property type="entry name" value="GATASE_TYPE_2"/>
    <property type="match status" value="1"/>
</dbReference>
<dbReference type="PROSITE" id="PS51464">
    <property type="entry name" value="SIS"/>
    <property type="match status" value="2"/>
</dbReference>
<accession>A6ZME2</accession>
<proteinExistence type="inferred from homology"/>
<name>YM084_YEAS7</name>
<gene>
    <name type="ORF">SCY_4254</name>
</gene>
<evidence type="ECO:0000250" key="1"/>
<evidence type="ECO:0000255" key="2">
    <source>
        <dbReference type="PROSITE-ProRule" id="PRU00609"/>
    </source>
</evidence>
<evidence type="ECO:0000255" key="3">
    <source>
        <dbReference type="PROSITE-ProRule" id="PRU00797"/>
    </source>
</evidence>
<evidence type="ECO:0000256" key="4">
    <source>
        <dbReference type="SAM" id="MobiDB-lite"/>
    </source>
</evidence>
<reference key="1">
    <citation type="journal article" date="2007" name="Proc. Natl. Acad. Sci. U.S.A.">
        <title>Genome sequencing and comparative analysis of Saccharomyces cerevisiae strain YJM789.</title>
        <authorList>
            <person name="Wei W."/>
            <person name="McCusker J.H."/>
            <person name="Hyman R.W."/>
            <person name="Jones T."/>
            <person name="Ning Y."/>
            <person name="Cao Z."/>
            <person name="Gu Z."/>
            <person name="Bruno D."/>
            <person name="Miranda M."/>
            <person name="Nguyen M."/>
            <person name="Wilhelmy J."/>
            <person name="Komp C."/>
            <person name="Tamse R."/>
            <person name="Wang X."/>
            <person name="Jia P."/>
            <person name="Luedi P."/>
            <person name="Oefner P.J."/>
            <person name="David L."/>
            <person name="Dietrich F.S."/>
            <person name="Li Y."/>
            <person name="Davis R.W."/>
            <person name="Steinmetz L.M."/>
        </authorList>
    </citation>
    <scope>NUCLEOTIDE SEQUENCE [LARGE SCALE GENOMIC DNA]</scope>
    <source>
        <strain>YJM789</strain>
    </source>
</reference>